<gene>
    <name evidence="1" type="primary">pstB</name>
    <name type="ordered locus">CPS_3640</name>
</gene>
<keyword id="KW-0067">ATP-binding</keyword>
<keyword id="KW-0997">Cell inner membrane</keyword>
<keyword id="KW-1003">Cell membrane</keyword>
<keyword id="KW-0472">Membrane</keyword>
<keyword id="KW-0547">Nucleotide-binding</keyword>
<keyword id="KW-0592">Phosphate transport</keyword>
<keyword id="KW-1278">Translocase</keyword>
<keyword id="KW-0813">Transport</keyword>
<feature type="chain" id="PRO_0000272441" description="Phosphate import ATP-binding protein PstB">
    <location>
        <begin position="1"/>
        <end position="279"/>
    </location>
</feature>
<feature type="domain" description="ABC transporter" evidence="1">
    <location>
        <begin position="33"/>
        <end position="274"/>
    </location>
</feature>
<feature type="binding site" evidence="1">
    <location>
        <begin position="65"/>
        <end position="72"/>
    </location>
    <ligand>
        <name>ATP</name>
        <dbReference type="ChEBI" id="CHEBI:30616"/>
    </ligand>
</feature>
<name>PSTB_COLP3</name>
<reference key="1">
    <citation type="journal article" date="2005" name="Proc. Natl. Acad. Sci. U.S.A.">
        <title>The psychrophilic lifestyle as revealed by the genome sequence of Colwellia psychrerythraea 34H through genomic and proteomic analyses.</title>
        <authorList>
            <person name="Methe B.A."/>
            <person name="Nelson K.E."/>
            <person name="Deming J.W."/>
            <person name="Momen B."/>
            <person name="Melamud E."/>
            <person name="Zhang X."/>
            <person name="Moult J."/>
            <person name="Madupu R."/>
            <person name="Nelson W.C."/>
            <person name="Dodson R.J."/>
            <person name="Brinkac L.M."/>
            <person name="Daugherty S.C."/>
            <person name="Durkin A.S."/>
            <person name="DeBoy R.T."/>
            <person name="Kolonay J.F."/>
            <person name="Sullivan S.A."/>
            <person name="Zhou L."/>
            <person name="Davidsen T.M."/>
            <person name="Wu M."/>
            <person name="Huston A.L."/>
            <person name="Lewis M."/>
            <person name="Weaver B."/>
            <person name="Weidman J.F."/>
            <person name="Khouri H."/>
            <person name="Utterback T.R."/>
            <person name="Feldblyum T.V."/>
            <person name="Fraser C.M."/>
        </authorList>
    </citation>
    <scope>NUCLEOTIDE SEQUENCE [LARGE SCALE GENOMIC DNA]</scope>
    <source>
        <strain>34H / ATCC BAA-681</strain>
    </source>
</reference>
<comment type="function">
    <text evidence="1">Part of the ABC transporter complex PstSACB involved in phosphate import. Responsible for energy coupling to the transport system.</text>
</comment>
<comment type="catalytic activity">
    <reaction evidence="1">
        <text>phosphate(out) + ATP + H2O = ADP + 2 phosphate(in) + H(+)</text>
        <dbReference type="Rhea" id="RHEA:24440"/>
        <dbReference type="ChEBI" id="CHEBI:15377"/>
        <dbReference type="ChEBI" id="CHEBI:15378"/>
        <dbReference type="ChEBI" id="CHEBI:30616"/>
        <dbReference type="ChEBI" id="CHEBI:43474"/>
        <dbReference type="ChEBI" id="CHEBI:456216"/>
        <dbReference type="EC" id="7.3.2.1"/>
    </reaction>
</comment>
<comment type="subunit">
    <text evidence="1">The complex is composed of two ATP-binding proteins (PstB), two transmembrane proteins (PstC and PstA) and a solute-binding protein (PstS).</text>
</comment>
<comment type="subcellular location">
    <subcellularLocation>
        <location evidence="1">Cell inner membrane</location>
        <topology evidence="1">Peripheral membrane protein</topology>
    </subcellularLocation>
</comment>
<comment type="similarity">
    <text evidence="1">Belongs to the ABC transporter superfamily. Phosphate importer (TC 3.A.1.7) family.</text>
</comment>
<sequence>MISISPKALAPGSDKAIEKKLDLTNLTPEQVALDINKLNLFYGKKQALNNITMSIPKGQVTAFIGPSGCGKSTLLRSINRMNDLVDNCHISGEINLHGSNIYDKHVDVAELRRKVGMVFQRPNPFPKTIYENVVYGLRIMGENNRRRLDEAAEQSLRSAALWNEVKDRLHESALGLSGGQQQRLVIARAIAIQPEVLLLDEPTSALDPISTLTIEELINDLKKQFTVVIVTHNMQQAARVSDQTAFMYMGDLIEYSDTNTLFTTPLKKKTEDYITGRYG</sequence>
<evidence type="ECO:0000255" key="1">
    <source>
        <dbReference type="HAMAP-Rule" id="MF_01702"/>
    </source>
</evidence>
<proteinExistence type="inferred from homology"/>
<organism>
    <name type="scientific">Colwellia psychrerythraea (strain 34H / ATCC BAA-681)</name>
    <name type="common">Vibrio psychroerythus</name>
    <dbReference type="NCBI Taxonomy" id="167879"/>
    <lineage>
        <taxon>Bacteria</taxon>
        <taxon>Pseudomonadati</taxon>
        <taxon>Pseudomonadota</taxon>
        <taxon>Gammaproteobacteria</taxon>
        <taxon>Alteromonadales</taxon>
        <taxon>Colwelliaceae</taxon>
        <taxon>Colwellia</taxon>
    </lineage>
</organism>
<accession>Q47Y12</accession>
<dbReference type="EC" id="7.3.2.1" evidence="1"/>
<dbReference type="EMBL" id="CP000083">
    <property type="protein sequence ID" value="AAZ27746.1"/>
    <property type="molecule type" value="Genomic_DNA"/>
</dbReference>
<dbReference type="RefSeq" id="WP_011044394.1">
    <property type="nucleotide sequence ID" value="NC_003910.7"/>
</dbReference>
<dbReference type="SMR" id="Q47Y12"/>
<dbReference type="STRING" id="167879.CPS_3640"/>
<dbReference type="KEGG" id="cps:CPS_3640"/>
<dbReference type="eggNOG" id="COG1117">
    <property type="taxonomic scope" value="Bacteria"/>
</dbReference>
<dbReference type="HOGENOM" id="CLU_000604_1_22_6"/>
<dbReference type="Proteomes" id="UP000000547">
    <property type="component" value="Chromosome"/>
</dbReference>
<dbReference type="GO" id="GO:0005886">
    <property type="term" value="C:plasma membrane"/>
    <property type="evidence" value="ECO:0007669"/>
    <property type="project" value="UniProtKB-SubCell"/>
</dbReference>
<dbReference type="GO" id="GO:0005524">
    <property type="term" value="F:ATP binding"/>
    <property type="evidence" value="ECO:0007669"/>
    <property type="project" value="UniProtKB-KW"/>
</dbReference>
<dbReference type="GO" id="GO:0016887">
    <property type="term" value="F:ATP hydrolysis activity"/>
    <property type="evidence" value="ECO:0007669"/>
    <property type="project" value="InterPro"/>
</dbReference>
<dbReference type="GO" id="GO:0015415">
    <property type="term" value="F:ATPase-coupled phosphate ion transmembrane transporter activity"/>
    <property type="evidence" value="ECO:0007669"/>
    <property type="project" value="UniProtKB-EC"/>
</dbReference>
<dbReference type="GO" id="GO:0035435">
    <property type="term" value="P:phosphate ion transmembrane transport"/>
    <property type="evidence" value="ECO:0007669"/>
    <property type="project" value="InterPro"/>
</dbReference>
<dbReference type="CDD" id="cd03260">
    <property type="entry name" value="ABC_PstB_phosphate_transporter"/>
    <property type="match status" value="1"/>
</dbReference>
<dbReference type="FunFam" id="3.40.50.300:FF:000132">
    <property type="entry name" value="Phosphate import ATP-binding protein PstB"/>
    <property type="match status" value="1"/>
</dbReference>
<dbReference type="Gene3D" id="3.40.50.300">
    <property type="entry name" value="P-loop containing nucleotide triphosphate hydrolases"/>
    <property type="match status" value="1"/>
</dbReference>
<dbReference type="InterPro" id="IPR003593">
    <property type="entry name" value="AAA+_ATPase"/>
</dbReference>
<dbReference type="InterPro" id="IPR003439">
    <property type="entry name" value="ABC_transporter-like_ATP-bd"/>
</dbReference>
<dbReference type="InterPro" id="IPR017871">
    <property type="entry name" value="ABC_transporter-like_CS"/>
</dbReference>
<dbReference type="InterPro" id="IPR027417">
    <property type="entry name" value="P-loop_NTPase"/>
</dbReference>
<dbReference type="InterPro" id="IPR005670">
    <property type="entry name" value="PstB-like"/>
</dbReference>
<dbReference type="NCBIfam" id="TIGR00972">
    <property type="entry name" value="3a0107s01c2"/>
    <property type="match status" value="1"/>
</dbReference>
<dbReference type="PANTHER" id="PTHR43423">
    <property type="entry name" value="ABC TRANSPORTER I FAMILY MEMBER 17"/>
    <property type="match status" value="1"/>
</dbReference>
<dbReference type="PANTHER" id="PTHR43423:SF12">
    <property type="entry name" value="IRON EXPORT ATP-BINDING PROTEIN FETA-RELATED"/>
    <property type="match status" value="1"/>
</dbReference>
<dbReference type="Pfam" id="PF00005">
    <property type="entry name" value="ABC_tran"/>
    <property type="match status" value="1"/>
</dbReference>
<dbReference type="SMART" id="SM00382">
    <property type="entry name" value="AAA"/>
    <property type="match status" value="1"/>
</dbReference>
<dbReference type="SUPFAM" id="SSF52540">
    <property type="entry name" value="P-loop containing nucleoside triphosphate hydrolases"/>
    <property type="match status" value="1"/>
</dbReference>
<dbReference type="PROSITE" id="PS00211">
    <property type="entry name" value="ABC_TRANSPORTER_1"/>
    <property type="match status" value="1"/>
</dbReference>
<dbReference type="PROSITE" id="PS50893">
    <property type="entry name" value="ABC_TRANSPORTER_2"/>
    <property type="match status" value="1"/>
</dbReference>
<dbReference type="PROSITE" id="PS51238">
    <property type="entry name" value="PSTB"/>
    <property type="match status" value="1"/>
</dbReference>
<protein>
    <recommendedName>
        <fullName evidence="1">Phosphate import ATP-binding protein PstB</fullName>
        <ecNumber evidence="1">7.3.2.1</ecNumber>
    </recommendedName>
    <alternativeName>
        <fullName evidence="1">ABC phosphate transporter</fullName>
    </alternativeName>
    <alternativeName>
        <fullName evidence="1">Phosphate-transporting ATPase</fullName>
    </alternativeName>
</protein>